<gene>
    <name type="ordered locus">At1g61330</name>
    <name type="ORF">T1F9.18</name>
</gene>
<accession>O64787</accession>
<sequence length="447" mass="51878">MSEASNKQMKLIKRLSDELVECILSFLPVQSTLQHRVLSKRYRDTWKLSRDLDFSGIFSVRRSQSEAVRIIEDVFIQHQGPEIDRFVLSLDHTGVEDKILSWVDTCLRKNIKELVLDFSSSKKVMEIPLNFSSSETLTVLKLQWCRFEIPNNLPKGLRLLKTLSLMRTEVTNEMIDSIFNNCIHLESLELVKCQMSGNGILTIYAHDHKKFKSLVVSCMPNLLSIFLDAPTLECYKYDGYAKTINVLKVNALEEAEFHYSRSKRRHSSDTVVDSMLACSAVHALTTTNILLEAITYRYLKGKLEKPLFKFENLREFKIFFKAPTFCTLFDIAEFLKECPKLEQFIIDIQNFTFEPQMYFWEIHHKAQIQNTSNNNYLLKCLTDVKIIGYKGHWHELDIVEFFVKNAPSLKRLELQMPKNAKNDAHTPDVARIKLIKTIFSGVKVTEV</sequence>
<keyword id="KW-1185">Reference proteome</keyword>
<protein>
    <recommendedName>
        <fullName>Putative FBD-associated F-box protein At1g61330</fullName>
    </recommendedName>
</protein>
<feature type="chain" id="PRO_0000283137" description="Putative FBD-associated F-box protein At1g61330">
    <location>
        <begin position="1"/>
        <end position="447"/>
    </location>
</feature>
<feature type="domain" description="F-box">
    <location>
        <begin position="10"/>
        <end position="57"/>
    </location>
</feature>
<feature type="domain" description="FBD">
    <location>
        <begin position="384"/>
        <end position="416"/>
    </location>
</feature>
<organism>
    <name type="scientific">Arabidopsis thaliana</name>
    <name type="common">Mouse-ear cress</name>
    <dbReference type="NCBI Taxonomy" id="3702"/>
    <lineage>
        <taxon>Eukaryota</taxon>
        <taxon>Viridiplantae</taxon>
        <taxon>Streptophyta</taxon>
        <taxon>Embryophyta</taxon>
        <taxon>Tracheophyta</taxon>
        <taxon>Spermatophyta</taxon>
        <taxon>Magnoliopsida</taxon>
        <taxon>eudicotyledons</taxon>
        <taxon>Gunneridae</taxon>
        <taxon>Pentapetalae</taxon>
        <taxon>rosids</taxon>
        <taxon>malvids</taxon>
        <taxon>Brassicales</taxon>
        <taxon>Brassicaceae</taxon>
        <taxon>Camelineae</taxon>
        <taxon>Arabidopsis</taxon>
    </lineage>
</organism>
<name>FBD4_ARATH</name>
<reference key="1">
    <citation type="journal article" date="2000" name="Nature">
        <title>Sequence and analysis of chromosome 1 of the plant Arabidopsis thaliana.</title>
        <authorList>
            <person name="Theologis A."/>
            <person name="Ecker J.R."/>
            <person name="Palm C.J."/>
            <person name="Federspiel N.A."/>
            <person name="Kaul S."/>
            <person name="White O."/>
            <person name="Alonso J."/>
            <person name="Altafi H."/>
            <person name="Araujo R."/>
            <person name="Bowman C.L."/>
            <person name="Brooks S.Y."/>
            <person name="Buehler E."/>
            <person name="Chan A."/>
            <person name="Chao Q."/>
            <person name="Chen H."/>
            <person name="Cheuk R.F."/>
            <person name="Chin C.W."/>
            <person name="Chung M.K."/>
            <person name="Conn L."/>
            <person name="Conway A.B."/>
            <person name="Conway A.R."/>
            <person name="Creasy T.H."/>
            <person name="Dewar K."/>
            <person name="Dunn P."/>
            <person name="Etgu P."/>
            <person name="Feldblyum T.V."/>
            <person name="Feng J.-D."/>
            <person name="Fong B."/>
            <person name="Fujii C.Y."/>
            <person name="Gill J.E."/>
            <person name="Goldsmith A.D."/>
            <person name="Haas B."/>
            <person name="Hansen N.F."/>
            <person name="Hughes B."/>
            <person name="Huizar L."/>
            <person name="Hunter J.L."/>
            <person name="Jenkins J."/>
            <person name="Johnson-Hopson C."/>
            <person name="Khan S."/>
            <person name="Khaykin E."/>
            <person name="Kim C.J."/>
            <person name="Koo H.L."/>
            <person name="Kremenetskaia I."/>
            <person name="Kurtz D.B."/>
            <person name="Kwan A."/>
            <person name="Lam B."/>
            <person name="Langin-Hooper S."/>
            <person name="Lee A."/>
            <person name="Lee J.M."/>
            <person name="Lenz C.A."/>
            <person name="Li J.H."/>
            <person name="Li Y.-P."/>
            <person name="Lin X."/>
            <person name="Liu S.X."/>
            <person name="Liu Z.A."/>
            <person name="Luros J.S."/>
            <person name="Maiti R."/>
            <person name="Marziali A."/>
            <person name="Militscher J."/>
            <person name="Miranda M."/>
            <person name="Nguyen M."/>
            <person name="Nierman W.C."/>
            <person name="Osborne B.I."/>
            <person name="Pai G."/>
            <person name="Peterson J."/>
            <person name="Pham P.K."/>
            <person name="Rizzo M."/>
            <person name="Rooney T."/>
            <person name="Rowley D."/>
            <person name="Sakano H."/>
            <person name="Salzberg S.L."/>
            <person name="Schwartz J.R."/>
            <person name="Shinn P."/>
            <person name="Southwick A.M."/>
            <person name="Sun H."/>
            <person name="Tallon L.J."/>
            <person name="Tambunga G."/>
            <person name="Toriumi M.J."/>
            <person name="Town C.D."/>
            <person name="Utterback T."/>
            <person name="Van Aken S."/>
            <person name="Vaysberg M."/>
            <person name="Vysotskaia V.S."/>
            <person name="Walker M."/>
            <person name="Wu D."/>
            <person name="Yu G."/>
            <person name="Fraser C.M."/>
            <person name="Venter J.C."/>
            <person name="Davis R.W."/>
        </authorList>
    </citation>
    <scope>NUCLEOTIDE SEQUENCE [LARGE SCALE GENOMIC DNA]</scope>
    <source>
        <strain>cv. Columbia</strain>
    </source>
</reference>
<reference key="2">
    <citation type="journal article" date="2017" name="Plant J.">
        <title>Araport11: a complete reannotation of the Arabidopsis thaliana reference genome.</title>
        <authorList>
            <person name="Cheng C.Y."/>
            <person name="Krishnakumar V."/>
            <person name="Chan A.P."/>
            <person name="Thibaud-Nissen F."/>
            <person name="Schobel S."/>
            <person name="Town C.D."/>
        </authorList>
    </citation>
    <scope>GENOME REANNOTATION</scope>
    <source>
        <strain>cv. Columbia</strain>
    </source>
</reference>
<proteinExistence type="predicted"/>
<dbReference type="EMBL" id="AC004255">
    <property type="protein sequence ID" value="AAC13908.1"/>
    <property type="molecule type" value="Genomic_DNA"/>
</dbReference>
<dbReference type="EMBL" id="CP002684">
    <property type="protein sequence ID" value="AEE33821.1"/>
    <property type="molecule type" value="Genomic_DNA"/>
</dbReference>
<dbReference type="PIR" id="A96639">
    <property type="entry name" value="A96639"/>
</dbReference>
<dbReference type="RefSeq" id="NP_176328.1">
    <property type="nucleotide sequence ID" value="NM_104814.1"/>
</dbReference>
<dbReference type="STRING" id="3702.O64787"/>
<dbReference type="iPTMnet" id="O64787"/>
<dbReference type="PaxDb" id="3702-AT1G61330.1"/>
<dbReference type="EnsemblPlants" id="AT1G61330.1">
    <property type="protein sequence ID" value="AT1G61330.1"/>
    <property type="gene ID" value="AT1G61330"/>
</dbReference>
<dbReference type="GeneID" id="842427"/>
<dbReference type="Gramene" id="AT1G61330.1">
    <property type="protein sequence ID" value="AT1G61330.1"/>
    <property type="gene ID" value="AT1G61330"/>
</dbReference>
<dbReference type="KEGG" id="ath:AT1G61330"/>
<dbReference type="Araport" id="AT1G61330"/>
<dbReference type="TAIR" id="AT1G61330"/>
<dbReference type="eggNOG" id="ENOG502RYMX">
    <property type="taxonomic scope" value="Eukaryota"/>
</dbReference>
<dbReference type="HOGENOM" id="CLU_045469_0_0_1"/>
<dbReference type="InParanoid" id="O64787"/>
<dbReference type="OMA" id="WELHQKQ"/>
<dbReference type="PhylomeDB" id="O64787"/>
<dbReference type="PRO" id="PR:O64787"/>
<dbReference type="Proteomes" id="UP000006548">
    <property type="component" value="Chromosome 1"/>
</dbReference>
<dbReference type="ExpressionAtlas" id="O64787">
    <property type="expression patterns" value="baseline and differential"/>
</dbReference>
<dbReference type="Gene3D" id="3.80.10.10">
    <property type="entry name" value="Ribonuclease Inhibitor"/>
    <property type="match status" value="1"/>
</dbReference>
<dbReference type="InterPro" id="IPR053772">
    <property type="entry name" value="At1g61320/At1g61330-like"/>
</dbReference>
<dbReference type="InterPro" id="IPR036047">
    <property type="entry name" value="F-box-like_dom_sf"/>
</dbReference>
<dbReference type="InterPro" id="IPR001810">
    <property type="entry name" value="F-box_dom"/>
</dbReference>
<dbReference type="InterPro" id="IPR055357">
    <property type="entry name" value="LRR_At1g61320_AtMIF1"/>
</dbReference>
<dbReference type="InterPro" id="IPR032675">
    <property type="entry name" value="LRR_dom_sf"/>
</dbReference>
<dbReference type="PANTHER" id="PTHR34145:SF77">
    <property type="match status" value="1"/>
</dbReference>
<dbReference type="PANTHER" id="PTHR34145">
    <property type="entry name" value="OS02G0105600 PROTEIN"/>
    <property type="match status" value="1"/>
</dbReference>
<dbReference type="Pfam" id="PF00646">
    <property type="entry name" value="F-box"/>
    <property type="match status" value="1"/>
</dbReference>
<dbReference type="Pfam" id="PF23622">
    <property type="entry name" value="LRR_At1g61320_AtMIF1"/>
    <property type="match status" value="1"/>
</dbReference>
<dbReference type="SUPFAM" id="SSF81383">
    <property type="entry name" value="F-box domain"/>
    <property type="match status" value="1"/>
</dbReference>
<dbReference type="SUPFAM" id="SSF52047">
    <property type="entry name" value="RNI-like"/>
    <property type="match status" value="1"/>
</dbReference>